<organism>
    <name type="scientific">Enterococcus faecalis (strain ATCC 700802 / V583)</name>
    <dbReference type="NCBI Taxonomy" id="226185"/>
    <lineage>
        <taxon>Bacteria</taxon>
        <taxon>Bacillati</taxon>
        <taxon>Bacillota</taxon>
        <taxon>Bacilli</taxon>
        <taxon>Lactobacillales</taxon>
        <taxon>Enterococcaceae</taxon>
        <taxon>Enterococcus</taxon>
    </lineage>
</organism>
<dbReference type="EMBL" id="AE016830">
    <property type="protein sequence ID" value="AAO80585.1"/>
    <property type="molecule type" value="Genomic_DNA"/>
</dbReference>
<dbReference type="RefSeq" id="NP_814515.1">
    <property type="nucleotide sequence ID" value="NC_004668.1"/>
</dbReference>
<dbReference type="RefSeq" id="WP_002358736.1">
    <property type="nucleotide sequence ID" value="NZ_KE136527.1"/>
</dbReference>
<dbReference type="SMR" id="Q837R3"/>
<dbReference type="STRING" id="226185.EF_0768"/>
<dbReference type="EnsemblBacteria" id="AAO80585">
    <property type="protein sequence ID" value="AAO80585"/>
    <property type="gene ID" value="EF_0768"/>
</dbReference>
<dbReference type="GeneID" id="60893060"/>
<dbReference type="KEGG" id="efa:EF0768"/>
<dbReference type="PATRIC" id="fig|226185.45.peg.2708"/>
<dbReference type="eggNOG" id="COG1481">
    <property type="taxonomic scope" value="Bacteria"/>
</dbReference>
<dbReference type="HOGENOM" id="CLU_053282_0_0_9"/>
<dbReference type="Proteomes" id="UP000001415">
    <property type="component" value="Chromosome"/>
</dbReference>
<dbReference type="GO" id="GO:0003677">
    <property type="term" value="F:DNA binding"/>
    <property type="evidence" value="ECO:0007669"/>
    <property type="project" value="UniProtKB-UniRule"/>
</dbReference>
<dbReference type="GO" id="GO:0051301">
    <property type="term" value="P:cell division"/>
    <property type="evidence" value="ECO:0007669"/>
    <property type="project" value="UniProtKB-UniRule"/>
</dbReference>
<dbReference type="GO" id="GO:0043937">
    <property type="term" value="P:regulation of sporulation"/>
    <property type="evidence" value="ECO:0007669"/>
    <property type="project" value="InterPro"/>
</dbReference>
<dbReference type="FunFam" id="3.10.28.10:FF:000002">
    <property type="entry name" value="Probable cell division protein WhiA"/>
    <property type="match status" value="1"/>
</dbReference>
<dbReference type="Gene3D" id="3.10.28.10">
    <property type="entry name" value="Homing endonucleases"/>
    <property type="match status" value="1"/>
</dbReference>
<dbReference type="HAMAP" id="MF_01420">
    <property type="entry name" value="HTH_type_WhiA"/>
    <property type="match status" value="1"/>
</dbReference>
<dbReference type="InterPro" id="IPR027434">
    <property type="entry name" value="Homing_endonucl"/>
</dbReference>
<dbReference type="InterPro" id="IPR018478">
    <property type="entry name" value="Sporu_reg_WhiA_N_dom"/>
</dbReference>
<dbReference type="InterPro" id="IPR003802">
    <property type="entry name" value="Sporulation_regulator_WhiA"/>
</dbReference>
<dbReference type="InterPro" id="IPR023054">
    <property type="entry name" value="Sporulation_regulator_WhiA_C"/>
</dbReference>
<dbReference type="InterPro" id="IPR039518">
    <property type="entry name" value="WhiA_LAGLIDADG_dom"/>
</dbReference>
<dbReference type="NCBIfam" id="TIGR00647">
    <property type="entry name" value="DNA_bind_WhiA"/>
    <property type="match status" value="1"/>
</dbReference>
<dbReference type="PANTHER" id="PTHR37307">
    <property type="entry name" value="CELL DIVISION PROTEIN WHIA-RELATED"/>
    <property type="match status" value="1"/>
</dbReference>
<dbReference type="PANTHER" id="PTHR37307:SF1">
    <property type="entry name" value="CELL DIVISION PROTEIN WHIA-RELATED"/>
    <property type="match status" value="1"/>
</dbReference>
<dbReference type="Pfam" id="PF02650">
    <property type="entry name" value="HTH_WhiA"/>
    <property type="match status" value="1"/>
</dbReference>
<dbReference type="Pfam" id="PF14527">
    <property type="entry name" value="LAGLIDADG_WhiA"/>
    <property type="match status" value="1"/>
</dbReference>
<dbReference type="Pfam" id="PF10298">
    <property type="entry name" value="WhiA_N"/>
    <property type="match status" value="1"/>
</dbReference>
<dbReference type="SUPFAM" id="SSF55608">
    <property type="entry name" value="Homing endonucleases"/>
    <property type="match status" value="1"/>
</dbReference>
<feature type="chain" id="PRO_0000376482" description="Probable cell division protein WhiA">
    <location>
        <begin position="1"/>
        <end position="311"/>
    </location>
</feature>
<feature type="DNA-binding region" description="H-T-H motif" evidence="1">
    <location>
        <begin position="274"/>
        <end position="308"/>
    </location>
</feature>
<keyword id="KW-0131">Cell cycle</keyword>
<keyword id="KW-0132">Cell division</keyword>
<keyword id="KW-0238">DNA-binding</keyword>
<keyword id="KW-1185">Reference proteome</keyword>
<evidence type="ECO:0000255" key="1">
    <source>
        <dbReference type="HAMAP-Rule" id="MF_01420"/>
    </source>
</evidence>
<sequence length="311" mass="35364">MSFASDVKKELTGLEVHREHAKAELAALIRMNGSLSLVNQQFVLNVQTENAAIARRMYSLLKDHYHAQAELLVRKKMKLKKNNVYIVRLKQDTQKILADLDIMDGVVFNGNVSNEIMGNAQKMRSYLRGAFMASGSVNNPETSRYHLEIFSIYEEHNNDICKMLNYYDLNARTLGRRNGYICYLKGAEKIADFLTLIGATNSMLKFEDVRIVRDMRNSVNRLVNCETANLNKTIDAASKQIENIQFIESTVGLTSLPEKLQEIAELRLEYPEVSLKELGEMIPSGAISKSGINHRIRKINEFAEKLREKSA</sequence>
<proteinExistence type="inferred from homology"/>
<comment type="function">
    <text evidence="1">Involved in cell division and chromosome segregation.</text>
</comment>
<comment type="similarity">
    <text evidence="1">Belongs to the WhiA family.</text>
</comment>
<reference key="1">
    <citation type="journal article" date="2003" name="Science">
        <title>Role of mobile DNA in the evolution of vancomycin-resistant Enterococcus faecalis.</title>
        <authorList>
            <person name="Paulsen I.T."/>
            <person name="Banerjei L."/>
            <person name="Myers G.S.A."/>
            <person name="Nelson K.E."/>
            <person name="Seshadri R."/>
            <person name="Read T.D."/>
            <person name="Fouts D.E."/>
            <person name="Eisen J.A."/>
            <person name="Gill S.R."/>
            <person name="Heidelberg J.F."/>
            <person name="Tettelin H."/>
            <person name="Dodson R.J."/>
            <person name="Umayam L.A."/>
            <person name="Brinkac L.M."/>
            <person name="Beanan M.J."/>
            <person name="Daugherty S.C."/>
            <person name="DeBoy R.T."/>
            <person name="Durkin S.A."/>
            <person name="Kolonay J.F."/>
            <person name="Madupu R."/>
            <person name="Nelson W.C."/>
            <person name="Vamathevan J.J."/>
            <person name="Tran B."/>
            <person name="Upton J."/>
            <person name="Hansen T."/>
            <person name="Shetty J."/>
            <person name="Khouri H.M."/>
            <person name="Utterback T.R."/>
            <person name="Radune D."/>
            <person name="Ketchum K.A."/>
            <person name="Dougherty B.A."/>
            <person name="Fraser C.M."/>
        </authorList>
    </citation>
    <scope>NUCLEOTIDE SEQUENCE [LARGE SCALE GENOMIC DNA]</scope>
    <source>
        <strain>ATCC 700802 / V583</strain>
    </source>
</reference>
<gene>
    <name evidence="1" type="primary">whiA</name>
    <name type="ordered locus">EF_0768</name>
</gene>
<name>WHIA_ENTFA</name>
<protein>
    <recommendedName>
        <fullName evidence="1">Probable cell division protein WhiA</fullName>
    </recommendedName>
</protein>
<accession>Q837R3</accession>